<gene>
    <name evidence="1" type="primary">rpl11</name>
    <name type="ordered locus">PH0001</name>
</gene>
<dbReference type="EMBL" id="BA000001">
    <property type="protein sequence ID" value="BAA29069.1"/>
    <property type="molecule type" value="Genomic_DNA"/>
</dbReference>
<dbReference type="PIR" id="F71217">
    <property type="entry name" value="F71217"/>
</dbReference>
<dbReference type="RefSeq" id="WP_010884120.1">
    <property type="nucleotide sequence ID" value="NC_000961.1"/>
</dbReference>
<dbReference type="SMR" id="O57779"/>
<dbReference type="STRING" id="70601.gene:9376907"/>
<dbReference type="EnsemblBacteria" id="BAA29069">
    <property type="protein sequence ID" value="BAA29069"/>
    <property type="gene ID" value="BAA29069"/>
</dbReference>
<dbReference type="GeneID" id="1443902"/>
<dbReference type="KEGG" id="pho:PH0001"/>
<dbReference type="eggNOG" id="arCOG04372">
    <property type="taxonomic scope" value="Archaea"/>
</dbReference>
<dbReference type="OrthoDB" id="8842at2157"/>
<dbReference type="Proteomes" id="UP000000752">
    <property type="component" value="Chromosome"/>
</dbReference>
<dbReference type="GO" id="GO:0015934">
    <property type="term" value="C:large ribosomal subunit"/>
    <property type="evidence" value="ECO:0007669"/>
    <property type="project" value="TreeGrafter"/>
</dbReference>
<dbReference type="GO" id="GO:0070180">
    <property type="term" value="F:large ribosomal subunit rRNA binding"/>
    <property type="evidence" value="ECO:0007669"/>
    <property type="project" value="UniProtKB-UniRule"/>
</dbReference>
<dbReference type="GO" id="GO:0003735">
    <property type="term" value="F:structural constituent of ribosome"/>
    <property type="evidence" value="ECO:0007669"/>
    <property type="project" value="InterPro"/>
</dbReference>
<dbReference type="GO" id="GO:0006412">
    <property type="term" value="P:translation"/>
    <property type="evidence" value="ECO:0007669"/>
    <property type="project" value="UniProtKB-UniRule"/>
</dbReference>
<dbReference type="CDD" id="cd00349">
    <property type="entry name" value="Ribosomal_L11"/>
    <property type="match status" value="1"/>
</dbReference>
<dbReference type="FunFam" id="1.10.10.250:FF:000006">
    <property type="entry name" value="50S ribosomal protein L11"/>
    <property type="match status" value="1"/>
</dbReference>
<dbReference type="FunFam" id="3.30.1550.10:FF:000007">
    <property type="entry name" value="50S ribosomal protein L11"/>
    <property type="match status" value="1"/>
</dbReference>
<dbReference type="Gene3D" id="1.10.10.250">
    <property type="entry name" value="Ribosomal protein L11, C-terminal domain"/>
    <property type="match status" value="1"/>
</dbReference>
<dbReference type="Gene3D" id="3.30.1550.10">
    <property type="entry name" value="Ribosomal protein L11/L12, N-terminal domain"/>
    <property type="match status" value="1"/>
</dbReference>
<dbReference type="HAMAP" id="MF_00736">
    <property type="entry name" value="Ribosomal_uL11"/>
    <property type="match status" value="1"/>
</dbReference>
<dbReference type="InterPro" id="IPR000911">
    <property type="entry name" value="Ribosomal_uL11"/>
</dbReference>
<dbReference type="InterPro" id="IPR020783">
    <property type="entry name" value="Ribosomal_uL11_C"/>
</dbReference>
<dbReference type="InterPro" id="IPR036769">
    <property type="entry name" value="Ribosomal_uL11_C_sf"/>
</dbReference>
<dbReference type="InterPro" id="IPR020785">
    <property type="entry name" value="Ribosomal_uL11_CS"/>
</dbReference>
<dbReference type="InterPro" id="IPR020784">
    <property type="entry name" value="Ribosomal_uL11_N"/>
</dbReference>
<dbReference type="InterPro" id="IPR036796">
    <property type="entry name" value="Ribosomal_uL11_N_sf"/>
</dbReference>
<dbReference type="NCBIfam" id="NF002232">
    <property type="entry name" value="PRK01143.1"/>
    <property type="match status" value="1"/>
</dbReference>
<dbReference type="PANTHER" id="PTHR11661">
    <property type="entry name" value="60S RIBOSOMAL PROTEIN L12"/>
    <property type="match status" value="1"/>
</dbReference>
<dbReference type="PANTHER" id="PTHR11661:SF1">
    <property type="entry name" value="LARGE RIBOSOMAL SUBUNIT PROTEIN UL11M"/>
    <property type="match status" value="1"/>
</dbReference>
<dbReference type="Pfam" id="PF00298">
    <property type="entry name" value="Ribosomal_L11"/>
    <property type="match status" value="1"/>
</dbReference>
<dbReference type="Pfam" id="PF03946">
    <property type="entry name" value="Ribosomal_L11_N"/>
    <property type="match status" value="1"/>
</dbReference>
<dbReference type="SMART" id="SM00649">
    <property type="entry name" value="RL11"/>
    <property type="match status" value="1"/>
</dbReference>
<dbReference type="SUPFAM" id="SSF54747">
    <property type="entry name" value="Ribosomal L11/L12e N-terminal domain"/>
    <property type="match status" value="1"/>
</dbReference>
<dbReference type="SUPFAM" id="SSF46906">
    <property type="entry name" value="Ribosomal protein L11, C-terminal domain"/>
    <property type="match status" value="1"/>
</dbReference>
<dbReference type="PROSITE" id="PS00359">
    <property type="entry name" value="RIBOSOMAL_L11"/>
    <property type="match status" value="1"/>
</dbReference>
<name>RL11_PYRHO</name>
<protein>
    <recommendedName>
        <fullName evidence="1">Large ribosomal subunit protein uL11</fullName>
    </recommendedName>
    <alternativeName>
        <fullName evidence="2">50S ribosomal protein L11</fullName>
    </alternativeName>
</protein>
<comment type="function">
    <text evidence="1">Forms part of the ribosomal stalk which helps the ribosome interact with GTP-bound translation factors.</text>
</comment>
<comment type="subunit">
    <text evidence="1">Part of the ribosomal stalk of the 50S ribosomal subunit. Interacts with L10 and the large rRNA to form the base of the stalk. L10 forms an elongated spine to which L12 dimers bind in a sequential fashion forming a multimeric L10(L12)X complex.</text>
</comment>
<comment type="similarity">
    <text evidence="1">Belongs to the universal ribosomal protein uL11 family.</text>
</comment>
<feature type="chain" id="PRO_0000104445" description="Large ribosomal subunit protein uL11">
    <location>
        <begin position="1"/>
        <end position="164"/>
    </location>
</feature>
<organism>
    <name type="scientific">Pyrococcus horikoshii (strain ATCC 700860 / DSM 12428 / JCM 9974 / NBRC 100139 / OT-3)</name>
    <dbReference type="NCBI Taxonomy" id="70601"/>
    <lineage>
        <taxon>Archaea</taxon>
        <taxon>Methanobacteriati</taxon>
        <taxon>Methanobacteriota</taxon>
        <taxon>Thermococci</taxon>
        <taxon>Thermococcales</taxon>
        <taxon>Thermococcaceae</taxon>
        <taxon>Pyrococcus</taxon>
    </lineage>
</organism>
<evidence type="ECO:0000255" key="1">
    <source>
        <dbReference type="HAMAP-Rule" id="MF_00736"/>
    </source>
</evidence>
<evidence type="ECO:0000305" key="2"/>
<proteinExistence type="inferred from homology"/>
<accession>O57779</accession>
<sequence>MKKQVVEVLVEGGKATPGPPLGPAIGPLGLNVKQVVDKINEATKEFAGMQVPVKIIVDPVTKQFEIEVGVPPTSQLIKKELGLEKGSGEPKHNIVGNLTMEQVIKIAKMKRSQMLALTLKAAAKEVIGTALSMGVTVEGKDPRIVQREIDEGVYDELFEKAEKE</sequence>
<keyword id="KW-0687">Ribonucleoprotein</keyword>
<keyword id="KW-0689">Ribosomal protein</keyword>
<keyword id="KW-0694">RNA-binding</keyword>
<keyword id="KW-0699">rRNA-binding</keyword>
<reference key="1">
    <citation type="journal article" date="1998" name="DNA Res.">
        <title>Complete sequence and gene organization of the genome of a hyper-thermophilic archaebacterium, Pyrococcus horikoshii OT3.</title>
        <authorList>
            <person name="Kawarabayasi Y."/>
            <person name="Sawada M."/>
            <person name="Horikawa H."/>
            <person name="Haikawa Y."/>
            <person name="Hino Y."/>
            <person name="Yamamoto S."/>
            <person name="Sekine M."/>
            <person name="Baba S."/>
            <person name="Kosugi H."/>
            <person name="Hosoyama A."/>
            <person name="Nagai Y."/>
            <person name="Sakai M."/>
            <person name="Ogura K."/>
            <person name="Otsuka R."/>
            <person name="Nakazawa H."/>
            <person name="Takamiya M."/>
            <person name="Ohfuku Y."/>
            <person name="Funahashi T."/>
            <person name="Tanaka T."/>
            <person name="Kudoh Y."/>
            <person name="Yamazaki J."/>
            <person name="Kushida N."/>
            <person name="Oguchi A."/>
            <person name="Aoki K."/>
            <person name="Yoshizawa T."/>
            <person name="Nakamura Y."/>
            <person name="Robb F.T."/>
            <person name="Horikoshi K."/>
            <person name="Masuchi Y."/>
            <person name="Shizuya H."/>
            <person name="Kikuchi H."/>
        </authorList>
    </citation>
    <scope>NUCLEOTIDE SEQUENCE [LARGE SCALE GENOMIC DNA]</scope>
    <source>
        <strain>ATCC 700860 / DSM 12428 / JCM 9974 / NBRC 100139 / OT-3</strain>
    </source>
</reference>